<feature type="signal peptide" evidence="1">
    <location>
        <begin position="1"/>
        <end position="22"/>
    </location>
</feature>
<feature type="chain" id="PRO_1000085049" description="Foldase protein PrsA">
    <location>
        <begin position="23"/>
        <end position="341"/>
    </location>
</feature>
<feature type="domain" description="PpiC" evidence="1">
    <location>
        <begin position="199"/>
        <end position="291"/>
    </location>
</feature>
<feature type="lipid moiety-binding region" description="N-palmitoyl cysteine" evidence="1">
    <location>
        <position position="23"/>
    </location>
</feature>
<feature type="lipid moiety-binding region" description="S-diacylglycerol cysteine" evidence="1">
    <location>
        <position position="23"/>
    </location>
</feature>
<name>PRSA_CLOK5</name>
<reference key="1">
    <citation type="journal article" date="2008" name="Proc. Natl. Acad. Sci. U.S.A.">
        <title>The genome of Clostridium kluyveri, a strict anaerobe with unique metabolic features.</title>
        <authorList>
            <person name="Seedorf H."/>
            <person name="Fricke W.F."/>
            <person name="Veith B."/>
            <person name="Brueggemann H."/>
            <person name="Liesegang H."/>
            <person name="Strittmatter A."/>
            <person name="Miethke M."/>
            <person name="Buckel W."/>
            <person name="Hinderberger J."/>
            <person name="Li F."/>
            <person name="Hagemeier C."/>
            <person name="Thauer R.K."/>
            <person name="Gottschalk G."/>
        </authorList>
    </citation>
    <scope>NUCLEOTIDE SEQUENCE [LARGE SCALE GENOMIC DNA]</scope>
    <source>
        <strain>ATCC 8527 / DSM 555 / NBRC 12016 / NCIMB 10680 / K1</strain>
    </source>
</reference>
<organism>
    <name type="scientific">Clostridium kluyveri (strain ATCC 8527 / DSM 555 / NBRC 12016 / NCIMB 10680 / K1)</name>
    <dbReference type="NCBI Taxonomy" id="431943"/>
    <lineage>
        <taxon>Bacteria</taxon>
        <taxon>Bacillati</taxon>
        <taxon>Bacillota</taxon>
        <taxon>Clostridia</taxon>
        <taxon>Eubacteriales</taxon>
        <taxon>Clostridiaceae</taxon>
        <taxon>Clostridium</taxon>
    </lineage>
</organism>
<gene>
    <name evidence="1" type="primary">prsA</name>
    <name type="ordered locus">CKL_0153</name>
</gene>
<proteinExistence type="inferred from homology"/>
<protein>
    <recommendedName>
        <fullName evidence="1">Foldase protein PrsA</fullName>
        <ecNumber evidence="1">5.2.1.8</ecNumber>
    </recommendedName>
</protein>
<sequence length="341" mass="38289">MKNIGRLAVTALIAVFIFSVTGCNMIEKTPEAIAKSTVAEVNGEKITRSDLDKDPNTIQLITQVKQQYGENYKENEDAVNTIKTQKEQILDDLITNKVVAQKAKELKLLPDETKLKSDMETQIAQLKKQNFNDDAEQFNTALKAQGFTEESFKAMFLSQLRTQQTLEKVTESISKNIKITDKEIEDYYNTNKSKYTEQPNKMHLAHILVKTEDEAKKVKKRLDDGEDFAKVAKEVSQDTASKDNGGDLGTVNYDNSGYDADFMAGALALKEGAISAPVKSSFGYHIIKCIKKEEYPVKALSAVKDQIKTQLESDKKNSLVSQKIQEWKKASTITKKEKNII</sequence>
<dbReference type="EC" id="5.2.1.8" evidence="1"/>
<dbReference type="EMBL" id="CP000673">
    <property type="protein sequence ID" value="EDK32223.1"/>
    <property type="molecule type" value="Genomic_DNA"/>
</dbReference>
<dbReference type="RefSeq" id="WP_011988749.1">
    <property type="nucleotide sequence ID" value="NC_009706.1"/>
</dbReference>
<dbReference type="SMR" id="A5N4J2"/>
<dbReference type="STRING" id="431943.CKL_0153"/>
<dbReference type="KEGG" id="ckl:CKL_0153"/>
<dbReference type="eggNOG" id="COG0760">
    <property type="taxonomic scope" value="Bacteria"/>
</dbReference>
<dbReference type="HOGENOM" id="CLU_034646_5_2_9"/>
<dbReference type="Proteomes" id="UP000002411">
    <property type="component" value="Chromosome"/>
</dbReference>
<dbReference type="GO" id="GO:0005886">
    <property type="term" value="C:plasma membrane"/>
    <property type="evidence" value="ECO:0007669"/>
    <property type="project" value="UniProtKB-SubCell"/>
</dbReference>
<dbReference type="GO" id="GO:0003755">
    <property type="term" value="F:peptidyl-prolyl cis-trans isomerase activity"/>
    <property type="evidence" value="ECO:0007669"/>
    <property type="project" value="UniProtKB-UniRule"/>
</dbReference>
<dbReference type="GO" id="GO:0006457">
    <property type="term" value="P:protein folding"/>
    <property type="evidence" value="ECO:0007669"/>
    <property type="project" value="UniProtKB-UniRule"/>
</dbReference>
<dbReference type="Gene3D" id="3.10.50.40">
    <property type="match status" value="1"/>
</dbReference>
<dbReference type="Gene3D" id="1.10.4030.10">
    <property type="entry name" value="Porin chaperone SurA, peptide-binding domain"/>
    <property type="match status" value="1"/>
</dbReference>
<dbReference type="HAMAP" id="MF_01145">
    <property type="entry name" value="Foldase_PrsA"/>
    <property type="match status" value="1"/>
</dbReference>
<dbReference type="InterPro" id="IPR023059">
    <property type="entry name" value="Foldase_PrsA"/>
</dbReference>
<dbReference type="InterPro" id="IPR046357">
    <property type="entry name" value="PPIase_dom_sf"/>
</dbReference>
<dbReference type="InterPro" id="IPR000297">
    <property type="entry name" value="PPIase_PpiC"/>
</dbReference>
<dbReference type="InterPro" id="IPR023058">
    <property type="entry name" value="PPIase_PpiC_CS"/>
</dbReference>
<dbReference type="InterPro" id="IPR050245">
    <property type="entry name" value="PrsA_foldase"/>
</dbReference>
<dbReference type="InterPro" id="IPR027304">
    <property type="entry name" value="Trigger_fact/SurA_dom_sf"/>
</dbReference>
<dbReference type="NCBIfam" id="NF000809">
    <property type="entry name" value="PRK00059.1"/>
    <property type="match status" value="1"/>
</dbReference>
<dbReference type="PANTHER" id="PTHR47245:SF1">
    <property type="entry name" value="FOLDASE PROTEIN PRSA"/>
    <property type="match status" value="1"/>
</dbReference>
<dbReference type="PANTHER" id="PTHR47245">
    <property type="entry name" value="PEPTIDYLPROLYL ISOMERASE"/>
    <property type="match status" value="1"/>
</dbReference>
<dbReference type="Pfam" id="PF13616">
    <property type="entry name" value="Rotamase_3"/>
    <property type="match status" value="1"/>
</dbReference>
<dbReference type="Pfam" id="PF13624">
    <property type="entry name" value="SurA_N_3"/>
    <property type="match status" value="1"/>
</dbReference>
<dbReference type="SUPFAM" id="SSF54534">
    <property type="entry name" value="FKBP-like"/>
    <property type="match status" value="1"/>
</dbReference>
<dbReference type="SUPFAM" id="SSF109998">
    <property type="entry name" value="Triger factor/SurA peptide-binding domain-like"/>
    <property type="match status" value="1"/>
</dbReference>
<dbReference type="PROSITE" id="PS01096">
    <property type="entry name" value="PPIC_PPIASE_1"/>
    <property type="match status" value="1"/>
</dbReference>
<dbReference type="PROSITE" id="PS50198">
    <property type="entry name" value="PPIC_PPIASE_2"/>
    <property type="match status" value="1"/>
</dbReference>
<dbReference type="PROSITE" id="PS51257">
    <property type="entry name" value="PROKAR_LIPOPROTEIN"/>
    <property type="match status" value="1"/>
</dbReference>
<evidence type="ECO:0000255" key="1">
    <source>
        <dbReference type="HAMAP-Rule" id="MF_01145"/>
    </source>
</evidence>
<comment type="function">
    <text evidence="1">Plays a major role in protein secretion by helping the post-translocational extracellular folding of several secreted proteins.</text>
</comment>
<comment type="catalytic activity">
    <reaction evidence="1">
        <text>[protein]-peptidylproline (omega=180) = [protein]-peptidylproline (omega=0)</text>
        <dbReference type="Rhea" id="RHEA:16237"/>
        <dbReference type="Rhea" id="RHEA-COMP:10747"/>
        <dbReference type="Rhea" id="RHEA-COMP:10748"/>
        <dbReference type="ChEBI" id="CHEBI:83833"/>
        <dbReference type="ChEBI" id="CHEBI:83834"/>
        <dbReference type="EC" id="5.2.1.8"/>
    </reaction>
</comment>
<comment type="subcellular location">
    <subcellularLocation>
        <location evidence="1">Cell membrane</location>
        <topology evidence="1">Lipid-anchor</topology>
    </subcellularLocation>
</comment>
<comment type="similarity">
    <text evidence="1">Belongs to the PrsA family.</text>
</comment>
<keyword id="KW-1003">Cell membrane</keyword>
<keyword id="KW-0413">Isomerase</keyword>
<keyword id="KW-0449">Lipoprotein</keyword>
<keyword id="KW-0472">Membrane</keyword>
<keyword id="KW-0564">Palmitate</keyword>
<keyword id="KW-1185">Reference proteome</keyword>
<keyword id="KW-0697">Rotamase</keyword>
<keyword id="KW-0732">Signal</keyword>
<accession>A5N4J2</accession>